<sequence>MQTLAQHLTSKAVNESLAQLILTLADTSKAISHAVRHGALAGVLGATEQENVQGETQKKLDIITNDMLKDALKADGTVRGLASEEEDHVVEVSANGQYLVCFDPLDGSSNIDINSLVGTIFSVLPAPQGELTEASFLQSGRNQLAAGYVLYGPSTMLALTTGQGVQLFTLHPETNEFLLTNATMSISPDTSEFAINMSNQRFWEAPMQTYIADLLLGKIGPREKSFNMRWIAAMVGDVHRVLSRGGIFTYPTDNKDPKKPYKLRLMYEANPMAFLVEQAGGKASTGYETILDIQPTQIHQRVAVILGSANEVDACLSYHGIDSRK</sequence>
<accession>Q8EAB6</accession>
<evidence type="ECO:0000255" key="1">
    <source>
        <dbReference type="HAMAP-Rule" id="MF_01855"/>
    </source>
</evidence>
<comment type="catalytic activity">
    <reaction evidence="1">
        <text>beta-D-fructose 1,6-bisphosphate + H2O = beta-D-fructose 6-phosphate + phosphate</text>
        <dbReference type="Rhea" id="RHEA:11064"/>
        <dbReference type="ChEBI" id="CHEBI:15377"/>
        <dbReference type="ChEBI" id="CHEBI:32966"/>
        <dbReference type="ChEBI" id="CHEBI:43474"/>
        <dbReference type="ChEBI" id="CHEBI:57634"/>
        <dbReference type="EC" id="3.1.3.11"/>
    </reaction>
</comment>
<comment type="cofactor">
    <cofactor evidence="1">
        <name>Mg(2+)</name>
        <dbReference type="ChEBI" id="CHEBI:18420"/>
    </cofactor>
    <text evidence="1">Binds 2 magnesium ions per subunit.</text>
</comment>
<comment type="pathway">
    <text evidence="1">Carbohydrate biosynthesis; gluconeogenesis.</text>
</comment>
<comment type="subunit">
    <text evidence="1">Homotetramer.</text>
</comment>
<comment type="subcellular location">
    <subcellularLocation>
        <location evidence="1">Cytoplasm</location>
    </subcellularLocation>
</comment>
<comment type="similarity">
    <text evidence="1">Belongs to the FBPase class 1 family.</text>
</comment>
<gene>
    <name evidence="1" type="primary">fbp</name>
    <name type="ordered locus">SO_3991</name>
</gene>
<protein>
    <recommendedName>
        <fullName evidence="1">Fructose-1,6-bisphosphatase class 1</fullName>
        <shortName evidence="1">FBPase class 1</shortName>
        <ecNumber evidence="1">3.1.3.11</ecNumber>
    </recommendedName>
    <alternativeName>
        <fullName evidence="1">D-fructose-1,6-bisphosphate 1-phosphohydrolase class 1</fullName>
    </alternativeName>
</protein>
<proteinExistence type="inferred from homology"/>
<organism>
    <name type="scientific">Shewanella oneidensis (strain ATCC 700550 / JCM 31522 / CIP 106686 / LMG 19005 / NCIMB 14063 / MR-1)</name>
    <dbReference type="NCBI Taxonomy" id="211586"/>
    <lineage>
        <taxon>Bacteria</taxon>
        <taxon>Pseudomonadati</taxon>
        <taxon>Pseudomonadota</taxon>
        <taxon>Gammaproteobacteria</taxon>
        <taxon>Alteromonadales</taxon>
        <taxon>Shewanellaceae</taxon>
        <taxon>Shewanella</taxon>
    </lineage>
</organism>
<dbReference type="EC" id="3.1.3.11" evidence="1"/>
<dbReference type="EMBL" id="AE014299">
    <property type="protein sequence ID" value="AAN56965.1"/>
    <property type="molecule type" value="Genomic_DNA"/>
</dbReference>
<dbReference type="RefSeq" id="NP_719521.1">
    <property type="nucleotide sequence ID" value="NC_004347.2"/>
</dbReference>
<dbReference type="RefSeq" id="WP_011073720.1">
    <property type="nucleotide sequence ID" value="NC_004347.2"/>
</dbReference>
<dbReference type="SMR" id="Q8EAB6"/>
<dbReference type="STRING" id="211586.SO_3991"/>
<dbReference type="PaxDb" id="211586-SO_3991"/>
<dbReference type="KEGG" id="son:SO_3991"/>
<dbReference type="PATRIC" id="fig|211586.12.peg.3872"/>
<dbReference type="eggNOG" id="COG0158">
    <property type="taxonomic scope" value="Bacteria"/>
</dbReference>
<dbReference type="HOGENOM" id="CLU_039977_0_0_6"/>
<dbReference type="OrthoDB" id="9806756at2"/>
<dbReference type="PhylomeDB" id="Q8EAB6"/>
<dbReference type="BioCyc" id="SONE211586:G1GMP-3699-MONOMER"/>
<dbReference type="UniPathway" id="UPA00138"/>
<dbReference type="Proteomes" id="UP000008186">
    <property type="component" value="Chromosome"/>
</dbReference>
<dbReference type="GO" id="GO:0005737">
    <property type="term" value="C:cytoplasm"/>
    <property type="evidence" value="ECO:0000318"/>
    <property type="project" value="GO_Central"/>
</dbReference>
<dbReference type="GO" id="GO:0005829">
    <property type="term" value="C:cytosol"/>
    <property type="evidence" value="ECO:0000318"/>
    <property type="project" value="GO_Central"/>
</dbReference>
<dbReference type="GO" id="GO:0042132">
    <property type="term" value="F:fructose 1,6-bisphosphate 1-phosphatase activity"/>
    <property type="evidence" value="ECO:0000318"/>
    <property type="project" value="GO_Central"/>
</dbReference>
<dbReference type="GO" id="GO:0000287">
    <property type="term" value="F:magnesium ion binding"/>
    <property type="evidence" value="ECO:0007669"/>
    <property type="project" value="UniProtKB-UniRule"/>
</dbReference>
<dbReference type="GO" id="GO:0030388">
    <property type="term" value="P:fructose 1,6-bisphosphate metabolic process"/>
    <property type="evidence" value="ECO:0000318"/>
    <property type="project" value="GO_Central"/>
</dbReference>
<dbReference type="GO" id="GO:0006002">
    <property type="term" value="P:fructose 6-phosphate metabolic process"/>
    <property type="evidence" value="ECO:0000318"/>
    <property type="project" value="GO_Central"/>
</dbReference>
<dbReference type="GO" id="GO:0006000">
    <property type="term" value="P:fructose metabolic process"/>
    <property type="evidence" value="ECO:0000318"/>
    <property type="project" value="GO_Central"/>
</dbReference>
<dbReference type="GO" id="GO:0006094">
    <property type="term" value="P:gluconeogenesis"/>
    <property type="evidence" value="ECO:0000318"/>
    <property type="project" value="GO_Central"/>
</dbReference>
<dbReference type="CDD" id="cd00354">
    <property type="entry name" value="FBPase"/>
    <property type="match status" value="1"/>
</dbReference>
<dbReference type="FunFam" id="3.30.540.10:FF:000006">
    <property type="entry name" value="Fructose-1,6-bisphosphatase class 1"/>
    <property type="match status" value="1"/>
</dbReference>
<dbReference type="FunFam" id="3.40.190.80:FF:000011">
    <property type="entry name" value="Fructose-1,6-bisphosphatase class 1"/>
    <property type="match status" value="1"/>
</dbReference>
<dbReference type="Gene3D" id="3.40.190.80">
    <property type="match status" value="1"/>
</dbReference>
<dbReference type="Gene3D" id="3.30.540.10">
    <property type="entry name" value="Fructose-1,6-Bisphosphatase, subunit A, domain 1"/>
    <property type="match status" value="1"/>
</dbReference>
<dbReference type="HAMAP" id="MF_01855">
    <property type="entry name" value="FBPase_class1"/>
    <property type="match status" value="1"/>
</dbReference>
<dbReference type="InterPro" id="IPR044015">
    <property type="entry name" value="FBPase_C_dom"/>
</dbReference>
<dbReference type="InterPro" id="IPR000146">
    <property type="entry name" value="FBPase_class-1"/>
</dbReference>
<dbReference type="InterPro" id="IPR033391">
    <property type="entry name" value="FBPase_N"/>
</dbReference>
<dbReference type="InterPro" id="IPR028343">
    <property type="entry name" value="FBPtase"/>
</dbReference>
<dbReference type="NCBIfam" id="NF006779">
    <property type="entry name" value="PRK09293.1-3"/>
    <property type="match status" value="1"/>
</dbReference>
<dbReference type="NCBIfam" id="NF006780">
    <property type="entry name" value="PRK09293.1-4"/>
    <property type="match status" value="1"/>
</dbReference>
<dbReference type="PANTHER" id="PTHR11556">
    <property type="entry name" value="FRUCTOSE-1,6-BISPHOSPHATASE-RELATED"/>
    <property type="match status" value="1"/>
</dbReference>
<dbReference type="PANTHER" id="PTHR11556:SF35">
    <property type="entry name" value="SEDOHEPTULOSE-1,7-BISPHOSPHATASE, CHLOROPLASTIC"/>
    <property type="match status" value="1"/>
</dbReference>
<dbReference type="Pfam" id="PF00316">
    <property type="entry name" value="FBPase"/>
    <property type="match status" value="1"/>
</dbReference>
<dbReference type="Pfam" id="PF18913">
    <property type="entry name" value="FBPase_C"/>
    <property type="match status" value="1"/>
</dbReference>
<dbReference type="PIRSF" id="PIRSF500210">
    <property type="entry name" value="FBPtase"/>
    <property type="match status" value="1"/>
</dbReference>
<dbReference type="PIRSF" id="PIRSF000904">
    <property type="entry name" value="FBPtase_SBPase"/>
    <property type="match status" value="1"/>
</dbReference>
<dbReference type="PRINTS" id="PR00115">
    <property type="entry name" value="F16BPHPHTASE"/>
</dbReference>
<dbReference type="SUPFAM" id="SSF56655">
    <property type="entry name" value="Carbohydrate phosphatase"/>
    <property type="match status" value="1"/>
</dbReference>
<feature type="chain" id="PRO_0000364707" description="Fructose-1,6-bisphosphatase class 1">
    <location>
        <begin position="1"/>
        <end position="325"/>
    </location>
</feature>
<feature type="binding site" evidence="1">
    <location>
        <position position="84"/>
    </location>
    <ligand>
        <name>Mg(2+)</name>
        <dbReference type="ChEBI" id="CHEBI:18420"/>
        <label>1</label>
    </ligand>
</feature>
<feature type="binding site" evidence="1">
    <location>
        <position position="103"/>
    </location>
    <ligand>
        <name>Mg(2+)</name>
        <dbReference type="ChEBI" id="CHEBI:18420"/>
        <label>1</label>
    </ligand>
</feature>
<feature type="binding site" evidence="1">
    <location>
        <position position="103"/>
    </location>
    <ligand>
        <name>Mg(2+)</name>
        <dbReference type="ChEBI" id="CHEBI:18420"/>
        <label>2</label>
    </ligand>
</feature>
<feature type="binding site" evidence="1">
    <location>
        <position position="105"/>
    </location>
    <ligand>
        <name>Mg(2+)</name>
        <dbReference type="ChEBI" id="CHEBI:18420"/>
        <label>1</label>
    </ligand>
</feature>
<feature type="binding site" evidence="1">
    <location>
        <begin position="106"/>
        <end position="109"/>
    </location>
    <ligand>
        <name>substrate</name>
    </ligand>
</feature>
<feature type="binding site" evidence="1">
    <location>
        <position position="106"/>
    </location>
    <ligand>
        <name>Mg(2+)</name>
        <dbReference type="ChEBI" id="CHEBI:18420"/>
        <label>2</label>
    </ligand>
</feature>
<feature type="binding site" evidence="1">
    <location>
        <position position="196"/>
    </location>
    <ligand>
        <name>substrate</name>
    </ligand>
</feature>
<feature type="binding site" evidence="1">
    <location>
        <position position="262"/>
    </location>
    <ligand>
        <name>substrate</name>
    </ligand>
</feature>
<feature type="binding site" evidence="1">
    <location>
        <position position="268"/>
    </location>
    <ligand>
        <name>Mg(2+)</name>
        <dbReference type="ChEBI" id="CHEBI:18420"/>
        <label>2</label>
    </ligand>
</feature>
<reference key="1">
    <citation type="journal article" date="2002" name="Nat. Biotechnol.">
        <title>Genome sequence of the dissimilatory metal ion-reducing bacterium Shewanella oneidensis.</title>
        <authorList>
            <person name="Heidelberg J.F."/>
            <person name="Paulsen I.T."/>
            <person name="Nelson K.E."/>
            <person name="Gaidos E.J."/>
            <person name="Nelson W.C."/>
            <person name="Read T.D."/>
            <person name="Eisen J.A."/>
            <person name="Seshadri R."/>
            <person name="Ward N.L."/>
            <person name="Methe B.A."/>
            <person name="Clayton R.A."/>
            <person name="Meyer T."/>
            <person name="Tsapin A."/>
            <person name="Scott J."/>
            <person name="Beanan M.J."/>
            <person name="Brinkac L.M."/>
            <person name="Daugherty S.C."/>
            <person name="DeBoy R.T."/>
            <person name="Dodson R.J."/>
            <person name="Durkin A.S."/>
            <person name="Haft D.H."/>
            <person name="Kolonay J.F."/>
            <person name="Madupu R."/>
            <person name="Peterson J.D."/>
            <person name="Umayam L.A."/>
            <person name="White O."/>
            <person name="Wolf A.M."/>
            <person name="Vamathevan J.J."/>
            <person name="Weidman J.F."/>
            <person name="Impraim M."/>
            <person name="Lee K."/>
            <person name="Berry K.J."/>
            <person name="Lee C."/>
            <person name="Mueller J."/>
            <person name="Khouri H.M."/>
            <person name="Gill J."/>
            <person name="Utterback T.R."/>
            <person name="McDonald L.A."/>
            <person name="Feldblyum T.V."/>
            <person name="Smith H.O."/>
            <person name="Venter J.C."/>
            <person name="Nealson K.H."/>
            <person name="Fraser C.M."/>
        </authorList>
    </citation>
    <scope>NUCLEOTIDE SEQUENCE [LARGE SCALE GENOMIC DNA]</scope>
    <source>
        <strain>ATCC 700550 / JCM 31522 / CIP 106686 / LMG 19005 / NCIMB 14063 / MR-1</strain>
    </source>
</reference>
<name>F16PA_SHEON</name>
<keyword id="KW-0119">Carbohydrate metabolism</keyword>
<keyword id="KW-0963">Cytoplasm</keyword>
<keyword id="KW-0378">Hydrolase</keyword>
<keyword id="KW-0460">Magnesium</keyword>
<keyword id="KW-0479">Metal-binding</keyword>
<keyword id="KW-1185">Reference proteome</keyword>